<accession>P40452</accession>
<accession>D6VVC9</accession>
<protein>
    <recommendedName>
        <fullName>Cytochrome c oxidase assembly factor 1</fullName>
    </recommendedName>
</protein>
<name>COA1_YEAST</name>
<keyword id="KW-0472">Membrane</keyword>
<keyword id="KW-0496">Mitochondrion</keyword>
<keyword id="KW-0999">Mitochondrion inner membrane</keyword>
<keyword id="KW-1185">Reference proteome</keyword>
<keyword id="KW-0812">Transmembrane</keyword>
<keyword id="KW-1133">Transmembrane helix</keyword>
<organism>
    <name type="scientific">Saccharomyces cerevisiae (strain ATCC 204508 / S288c)</name>
    <name type="common">Baker's yeast</name>
    <dbReference type="NCBI Taxonomy" id="559292"/>
    <lineage>
        <taxon>Eukaryota</taxon>
        <taxon>Fungi</taxon>
        <taxon>Dikarya</taxon>
        <taxon>Ascomycota</taxon>
        <taxon>Saccharomycotina</taxon>
        <taxon>Saccharomycetes</taxon>
        <taxon>Saccharomycetales</taxon>
        <taxon>Saccharomycetaceae</taxon>
        <taxon>Saccharomyces</taxon>
    </lineage>
</organism>
<dbReference type="EMBL" id="Z38059">
    <property type="protein sequence ID" value="CAA86121.1"/>
    <property type="molecule type" value="Genomic_DNA"/>
</dbReference>
<dbReference type="EMBL" id="BK006942">
    <property type="protein sequence ID" value="DAA08395.1"/>
    <property type="molecule type" value="Genomic_DNA"/>
</dbReference>
<dbReference type="PIR" id="S48377">
    <property type="entry name" value="S48377"/>
</dbReference>
<dbReference type="RefSeq" id="NP_012109.1">
    <property type="nucleotide sequence ID" value="NM_001179505.1"/>
</dbReference>
<dbReference type="SMR" id="P40452"/>
<dbReference type="BioGRID" id="34835">
    <property type="interactions" value="94"/>
</dbReference>
<dbReference type="DIP" id="DIP-4708N"/>
<dbReference type="FunCoup" id="P40452">
    <property type="interactions" value="65"/>
</dbReference>
<dbReference type="IntAct" id="P40452">
    <property type="interactions" value="6"/>
</dbReference>
<dbReference type="MINT" id="P40452"/>
<dbReference type="STRING" id="4932.YIL157C"/>
<dbReference type="iPTMnet" id="P40452"/>
<dbReference type="PaxDb" id="4932-YIL157C"/>
<dbReference type="PeptideAtlas" id="P40452"/>
<dbReference type="EnsemblFungi" id="YIL157C_mRNA">
    <property type="protein sequence ID" value="YIL157C"/>
    <property type="gene ID" value="YIL157C"/>
</dbReference>
<dbReference type="GeneID" id="854649"/>
<dbReference type="KEGG" id="sce:YIL157C"/>
<dbReference type="AGR" id="SGD:S000001419"/>
<dbReference type="SGD" id="S000001419">
    <property type="gene designation" value="COA1"/>
</dbReference>
<dbReference type="VEuPathDB" id="FungiDB:YIL157C"/>
<dbReference type="eggNOG" id="ENOG502RZQV">
    <property type="taxonomic scope" value="Eukaryota"/>
</dbReference>
<dbReference type="HOGENOM" id="CLU_092488_2_1_1"/>
<dbReference type="InParanoid" id="P40452"/>
<dbReference type="OMA" id="EFLIHEW"/>
<dbReference type="OrthoDB" id="2100652at2759"/>
<dbReference type="BioCyc" id="YEAST:G3O-31405-MONOMER"/>
<dbReference type="BioGRID-ORCS" id="854649">
    <property type="hits" value="6 hits in 10 CRISPR screens"/>
</dbReference>
<dbReference type="PRO" id="PR:P40452"/>
<dbReference type="Proteomes" id="UP000002311">
    <property type="component" value="Chromosome IX"/>
</dbReference>
<dbReference type="RNAct" id="P40452">
    <property type="molecule type" value="protein"/>
</dbReference>
<dbReference type="GO" id="GO:0005743">
    <property type="term" value="C:mitochondrial inner membrane"/>
    <property type="evidence" value="ECO:0000314"/>
    <property type="project" value="SGD"/>
</dbReference>
<dbReference type="GO" id="GO:0031966">
    <property type="term" value="C:mitochondrial membrane"/>
    <property type="evidence" value="ECO:0000314"/>
    <property type="project" value="SGD"/>
</dbReference>
<dbReference type="GO" id="GO:0005739">
    <property type="term" value="C:mitochondrion"/>
    <property type="evidence" value="ECO:0007005"/>
    <property type="project" value="SGD"/>
</dbReference>
<dbReference type="GO" id="GO:0033617">
    <property type="term" value="P:mitochondrial cytochrome c oxidase assembly"/>
    <property type="evidence" value="ECO:0000315"/>
    <property type="project" value="SGD"/>
</dbReference>
<dbReference type="InterPro" id="IPR014807">
    <property type="entry name" value="Coa1"/>
</dbReference>
<dbReference type="InterPro" id="IPR042432">
    <property type="entry name" value="Coa1_fungi"/>
</dbReference>
<dbReference type="PANTHER" id="PTHR28523">
    <property type="entry name" value="CYTOCHROME C OXIDASE ASSEMBLY FACTOR 1"/>
    <property type="match status" value="1"/>
</dbReference>
<dbReference type="PANTHER" id="PTHR28523:SF1">
    <property type="entry name" value="CYTOCHROME C OXIDASE ASSEMBLY FACTOR 1"/>
    <property type="match status" value="1"/>
</dbReference>
<dbReference type="Pfam" id="PF08695">
    <property type="entry name" value="Coa1"/>
    <property type="match status" value="1"/>
</dbReference>
<comment type="function">
    <text evidence="3 4">Required for efficient assembly of cytochrome c oxidase in the mitochondrial inner membrane. Involved in a step coupling MSS51-dependent cotranslational insertion of COX1 to the addition of its heme A and copper B cofactors.</text>
</comment>
<comment type="subunit">
    <text evidence="3 4">Interacts with COX1, COX14, MSS51 and SHY1.</text>
</comment>
<comment type="interaction">
    <interactant intactId="EBI-25287">
        <id>P40452</id>
    </interactant>
    <interactant intactId="EBI-5113">
        <id>P39103</id>
        <label>COX14</label>
    </interactant>
    <organismsDiffer>false</organismsDiffer>
    <experiments>2</experiments>
</comment>
<comment type="interaction">
    <interactant intactId="EBI-25287">
        <id>P40452</id>
    </interactant>
    <interactant intactId="EBI-11318">
        <id>P32335</id>
        <label>MSS51</label>
    </interactant>
    <organismsDiffer>false</organismsDiffer>
    <experiments>3</experiments>
</comment>
<comment type="interaction">
    <interactant intactId="EBI-25287">
        <id>P40452</id>
    </interactant>
    <interactant intactId="EBI-17111">
        <id>P53266</id>
        <label>SHY1</label>
    </interactant>
    <organismsDiffer>false</organismsDiffer>
    <experiments>5</experiments>
</comment>
<comment type="subcellular location">
    <subcellularLocation>
        <location evidence="5">Mitochondrion inner membrane</location>
        <topology evidence="5">Single-pass membrane protein</topology>
    </subcellularLocation>
</comment>
<comment type="miscellaneous">
    <text evidence="2">Present with 1680 molecules/cell in log phase SD medium.</text>
</comment>
<comment type="similarity">
    <text evidence="5">Belongs to the COA1 family.</text>
</comment>
<proteinExistence type="evidence at protein level"/>
<sequence length="197" mass="22044">MMLRLVTKGLPKVTPSAAKAVLVRGSLLHSFSTSARFNNSVAEDEAKIVLKDKNRPLRIDRELPDPTTERRKRIAGFLLFSVAIGSALSLIFNYEKTESPIISNTLYYIRRSPATKNILGESIEFDGIIPWVYGELNSVKGRINITFYIKGDKNVTGTVRLVADRNTHDEEFLIHEWSVTAAGQKIDLLAENTKTPI</sequence>
<gene>
    <name type="primary">COA1</name>
    <name type="synonym">FMP35</name>
    <name type="ordered locus">YIL157C</name>
</gene>
<feature type="chain" id="PRO_0000202954" description="Cytochrome c oxidase assembly factor 1">
    <location>
        <begin position="1"/>
        <end position="197"/>
    </location>
</feature>
<feature type="topological domain" description="Mitochondrial matrix" evidence="1">
    <location>
        <begin position="1"/>
        <end position="73"/>
    </location>
</feature>
<feature type="transmembrane region" description="Helical" evidence="1">
    <location>
        <begin position="74"/>
        <end position="94"/>
    </location>
</feature>
<feature type="topological domain" description="Mitochondrial intermembrane" evidence="1">
    <location>
        <begin position="95"/>
        <end position="197"/>
    </location>
</feature>
<evidence type="ECO:0000255" key="1"/>
<evidence type="ECO:0000269" key="2">
    <source>
    </source>
</evidence>
<evidence type="ECO:0000269" key="3">
    <source>
    </source>
</evidence>
<evidence type="ECO:0000269" key="4">
    <source>
    </source>
</evidence>
<evidence type="ECO:0000305" key="5"/>
<reference key="1">
    <citation type="journal article" date="1997" name="Nature">
        <title>The nucleotide sequence of Saccharomyces cerevisiae chromosome IX.</title>
        <authorList>
            <person name="Churcher C.M."/>
            <person name="Bowman S."/>
            <person name="Badcock K."/>
            <person name="Bankier A.T."/>
            <person name="Brown D."/>
            <person name="Chillingworth T."/>
            <person name="Connor R."/>
            <person name="Devlin K."/>
            <person name="Gentles S."/>
            <person name="Hamlin N."/>
            <person name="Harris D.E."/>
            <person name="Horsnell T."/>
            <person name="Hunt S."/>
            <person name="Jagels K."/>
            <person name="Jones M."/>
            <person name="Lye G."/>
            <person name="Moule S."/>
            <person name="Odell C."/>
            <person name="Pearson D."/>
            <person name="Rajandream M.A."/>
            <person name="Rice P."/>
            <person name="Rowley N."/>
            <person name="Skelton J."/>
            <person name="Smith V."/>
            <person name="Walsh S.V."/>
            <person name="Whitehead S."/>
            <person name="Barrell B.G."/>
        </authorList>
    </citation>
    <scope>NUCLEOTIDE SEQUENCE [LARGE SCALE GENOMIC DNA]</scope>
    <source>
        <strain>ATCC 204508 / S288c</strain>
    </source>
</reference>
<reference key="2">
    <citation type="journal article" date="2014" name="G3 (Bethesda)">
        <title>The reference genome sequence of Saccharomyces cerevisiae: Then and now.</title>
        <authorList>
            <person name="Engel S.R."/>
            <person name="Dietrich F.S."/>
            <person name="Fisk D.G."/>
            <person name="Binkley G."/>
            <person name="Balakrishnan R."/>
            <person name="Costanzo M.C."/>
            <person name="Dwight S.S."/>
            <person name="Hitz B.C."/>
            <person name="Karra K."/>
            <person name="Nash R.S."/>
            <person name="Weng S."/>
            <person name="Wong E.D."/>
            <person name="Lloyd P."/>
            <person name="Skrzypek M.S."/>
            <person name="Miyasato S.R."/>
            <person name="Simison M."/>
            <person name="Cherry J.M."/>
        </authorList>
    </citation>
    <scope>GENOME REANNOTATION</scope>
    <source>
        <strain>ATCC 204508 / S288c</strain>
    </source>
</reference>
<reference key="3">
    <citation type="journal article" date="2003" name="Nature">
        <title>Global analysis of protein localization in budding yeast.</title>
        <authorList>
            <person name="Huh W.-K."/>
            <person name="Falvo J.V."/>
            <person name="Gerke L.C."/>
            <person name="Carroll A.S."/>
            <person name="Howson R.W."/>
            <person name="Weissman J.S."/>
            <person name="O'Shea E.K."/>
        </authorList>
    </citation>
    <scope>SUBCELLULAR LOCATION [LARGE SCALE ANALYSIS]</scope>
</reference>
<reference key="4">
    <citation type="journal article" date="2003" name="Nature">
        <title>Global analysis of protein expression in yeast.</title>
        <authorList>
            <person name="Ghaemmaghami S."/>
            <person name="Huh W.-K."/>
            <person name="Bower K."/>
            <person name="Howson R.W."/>
            <person name="Belle A."/>
            <person name="Dephoure N."/>
            <person name="O'Shea E.K."/>
            <person name="Weissman J.S."/>
        </authorList>
    </citation>
    <scope>LEVEL OF PROTEIN EXPRESSION [LARGE SCALE ANALYSIS]</scope>
</reference>
<reference key="5">
    <citation type="journal article" date="2003" name="Proc. Natl. Acad. Sci. U.S.A.">
        <title>The proteome of Saccharomyces cerevisiae mitochondria.</title>
        <authorList>
            <person name="Sickmann A."/>
            <person name="Reinders J."/>
            <person name="Wagner Y."/>
            <person name="Joppich C."/>
            <person name="Zahedi R.P."/>
            <person name="Meyer H.E."/>
            <person name="Schoenfisch B."/>
            <person name="Perschil I."/>
            <person name="Chacinska A."/>
            <person name="Guiard B."/>
            <person name="Rehling P."/>
            <person name="Pfanner N."/>
            <person name="Meisinger C."/>
        </authorList>
    </citation>
    <scope>SUBCELLULAR LOCATION [LARGE SCALE ANALYSIS]</scope>
    <source>
        <strain>ATCC 76625 / YPH499</strain>
    </source>
</reference>
<reference key="6">
    <citation type="journal article" date="2007" name="EMBO J.">
        <title>Coa1 links the Mss51 post-translational function to Cox1 cofactor insertion in cytochrome c oxidase assembly.</title>
        <authorList>
            <person name="Pierrel F."/>
            <person name="Bestwick M.L."/>
            <person name="Cobine P.A."/>
            <person name="Khalimonchuk O."/>
            <person name="Cricco J.A."/>
            <person name="Winge D.R."/>
        </authorList>
    </citation>
    <scope>FUNCTION</scope>
    <scope>SUBCELLULAR LOCATION</scope>
    <scope>INTERACTION WITH COX1; COX14; MSS51 AND SHY1</scope>
</reference>
<reference key="7">
    <citation type="journal article" date="2007" name="EMBO J.">
        <title>Shy1 couples Cox1 translational regulation to cytochrome c oxidase assembly.</title>
        <authorList>
            <person name="Mick D.U."/>
            <person name="Wagner K."/>
            <person name="van der Laan M."/>
            <person name="Frazier A.E."/>
            <person name="Perschil I."/>
            <person name="Pawlas M."/>
            <person name="Meyer H.E."/>
            <person name="Warscheid B."/>
            <person name="Rehling P."/>
        </authorList>
    </citation>
    <scope>FUNCTION</scope>
    <scope>SUBCELLULAR LOCATION</scope>
    <scope>TOPOLOGY</scope>
    <scope>INTERACTION WITH MSS51 AND SHY1</scope>
</reference>